<proteinExistence type="evidence at protein level"/>
<accession>A8Q2D1</accession>
<accession>D5FM35</accession>
<accession>D5FM36</accession>
<name>NAS35_BRUMA</name>
<gene>
    <name evidence="14" type="primary">dpy-31</name>
    <name evidence="12" type="synonym">nas-35</name>
    <name evidence="14" type="ORF">Bm5432</name>
</gene>
<sequence>MALLKPFLSRTFSSFFATITGGRNLIDSIEELITTNYWLIFVMIIVCTCSAPSNGAFFLNDPYGYPFVSLQDDSIESVSATTITTTTIISTIITTTTATQRIFQEKAKTFGQSAEEIQKVKYYLEKIQKFEAKQHPEEIRQQHTTKNSEAIKDDLQIAVEVAKFEKRQKDSITLNPEENGQYYEGDIVLDAQQAHEIYESMIQHGRRTKRKFIRSELRRWDSHKPIIYSFDGSHTIREQRVIELALEHWHNITCLNFERRDDEIQENRIVFTDVDGCASNVGRHPLGEPQFVSLAPECIRLGVIAHEVAHALGFWHEQSRPDRDNYVTVRWENIDRDSKGQFLKELPTDVDNGDVPYDYGSIMHYRSKAFGRYEDLFTLNTNIMDYQKTIGQRDQLSFNDIRLMNVIYCSDSCAQKLPCQRGGYTDPRRCGRCRCPDGFTGKLCERIMPGFGADCGGRIELTSSWKRITSPNYPRDFKEGQECSWLLVAPPGQRVQLRFYGEFEMYCKVRHSLCMDYIEIRNSTDFANTGMRYCCYGTPKSSIMSATEDMLVLFRSFYRGGKGFQAQVRALPTTVFNIRTVRSMDEFNANLNKHAVADS</sequence>
<keyword id="KW-0025">Alternative splicing</keyword>
<keyword id="KW-0165">Cleavage on pair of basic residues</keyword>
<keyword id="KW-1015">Disulfide bond</keyword>
<keyword id="KW-0245">EGF-like domain</keyword>
<keyword id="KW-0325">Glycoprotein</keyword>
<keyword id="KW-0378">Hydrolase</keyword>
<keyword id="KW-0479">Metal-binding</keyword>
<keyword id="KW-0482">Metalloprotease</keyword>
<keyword id="KW-0645">Protease</keyword>
<keyword id="KW-1185">Reference proteome</keyword>
<keyword id="KW-0964">Secreted</keyword>
<keyword id="KW-0732">Signal</keyword>
<keyword id="KW-0862">Zinc</keyword>
<keyword id="KW-0865">Zymogen</keyword>
<feature type="signal peptide" evidence="3">
    <location>
        <begin position="1"/>
        <end position="22"/>
    </location>
</feature>
<feature type="propeptide" id="PRO_0000442244" evidence="1">
    <location>
        <begin position="23"/>
        <end position="211"/>
    </location>
</feature>
<feature type="chain" id="PRO_0000442245" description="Zinc metalloproteinase dpy-31">
    <location>
        <begin position="212"/>
        <end position="599"/>
    </location>
</feature>
<feature type="domain" description="Peptidase M12A" evidence="7">
    <location>
        <begin position="211"/>
        <end position="410"/>
    </location>
</feature>
<feature type="domain" description="EGF-like" evidence="5">
    <location>
        <begin position="405"/>
        <end position="445"/>
    </location>
</feature>
<feature type="domain" description="CUB" evidence="4">
    <location>
        <begin position="455"/>
        <end position="571"/>
    </location>
</feature>
<feature type="active site" evidence="7">
    <location>
        <position position="307"/>
    </location>
</feature>
<feature type="binding site" evidence="7">
    <location>
        <position position="306"/>
    </location>
    <ligand>
        <name>Zn(2+)</name>
        <dbReference type="ChEBI" id="CHEBI:29105"/>
        <note>catalytic</note>
    </ligand>
</feature>
<feature type="binding site" evidence="7">
    <location>
        <position position="310"/>
    </location>
    <ligand>
        <name>Zn(2+)</name>
        <dbReference type="ChEBI" id="CHEBI:29105"/>
        <note>catalytic</note>
    </ligand>
</feature>
<feature type="binding site" evidence="7">
    <location>
        <position position="316"/>
    </location>
    <ligand>
        <name>Zn(2+)</name>
        <dbReference type="ChEBI" id="CHEBI:29105"/>
        <note>catalytic</note>
    </ligand>
</feature>
<feature type="glycosylation site" description="N-linked (GlcNAc...) asparagine" evidence="6">
    <location>
        <position position="251"/>
    </location>
</feature>
<feature type="glycosylation site" description="N-linked (GlcNAc...) asparagine" evidence="6">
    <location>
        <position position="522"/>
    </location>
</feature>
<feature type="disulfide bond" evidence="7">
    <location>
        <begin position="254"/>
        <end position="409"/>
    </location>
</feature>
<feature type="disulfide bond" evidence="7">
    <location>
        <begin position="277"/>
        <end position="298"/>
    </location>
</feature>
<feature type="disulfide bond" evidence="5">
    <location>
        <begin position="413"/>
        <end position="433"/>
    </location>
</feature>
<feature type="disulfide bond" evidence="5">
    <location>
        <begin position="435"/>
        <end position="444"/>
    </location>
</feature>
<feature type="disulfide bond" evidence="4">
    <location>
        <begin position="455"/>
        <end position="483"/>
    </location>
</feature>
<feature type="splice variant" id="VSP_059217" description="In isoform dpy-31b." evidence="11">
    <original>VFNIRTVRSMDEFNANLNKHAVADS</original>
    <variation>GLFLAWSEWSACNASYGAQHRIRHRRRICVDGACMLV</variation>
    <location>
        <begin position="575"/>
        <end position="599"/>
    </location>
</feature>
<reference evidence="12" key="1">
    <citation type="journal article" date="2010" name="Int. J. Parasitol.">
        <title>Collagen processing and cuticle formation is catalysed by the astacin metalloprotease DPY-31 in free-living and parasitic nematodes.</title>
        <authorList>
            <person name="Stepek G."/>
            <person name="McCormack G."/>
            <person name="Page A.P."/>
        </authorList>
    </citation>
    <scope>NUCLEOTIDE SEQUENCE [GENOMIC DNA]</scope>
    <scope>FUNCTION</scope>
    <scope>CATALYTIC ACTIVITY</scope>
    <scope>ALTERNATIVE SPLICING</scope>
</reference>
<reference evidence="13" key="2">
    <citation type="journal article" date="2007" name="Science">
        <title>Draft genome of the filarial nematode parasite Brugia malayi.</title>
        <authorList>
            <person name="Ghedin E."/>
            <person name="Wang S."/>
            <person name="Spiro D."/>
            <person name="Caler E."/>
            <person name="Zhao Q."/>
            <person name="Crabtree J."/>
            <person name="Allen J.E."/>
            <person name="Delcher A.L."/>
            <person name="Guiliano D.B."/>
            <person name="Miranda-Saavedra D."/>
            <person name="Angiuoli S.V."/>
            <person name="Creasy T."/>
            <person name="Amedeo P."/>
            <person name="Haas B."/>
            <person name="El-Sayed N.M."/>
            <person name="Wortman J.R."/>
            <person name="Feldblyum T."/>
            <person name="Tallon L."/>
            <person name="Schatz M."/>
            <person name="Shumway M."/>
            <person name="Koo H."/>
            <person name="Salzberg S.L."/>
            <person name="Schobel S."/>
            <person name="Pertea M."/>
            <person name="Pop M."/>
            <person name="White O."/>
            <person name="Barton G.J."/>
            <person name="Carlow C.K.S."/>
            <person name="Crawford M.J."/>
            <person name="Daub J."/>
            <person name="Dimmic M.W."/>
            <person name="Estes C.F."/>
            <person name="Foster J.M."/>
            <person name="Ganatra M."/>
            <person name="Gregory W.F."/>
            <person name="Johnson N.M."/>
            <person name="Jin J."/>
            <person name="Komuniecki R."/>
            <person name="Korf I."/>
            <person name="Kumar S."/>
            <person name="Laney S."/>
            <person name="Li B.-W."/>
            <person name="Li W."/>
            <person name="Lindblom T.H."/>
            <person name="Lustigman S."/>
            <person name="Ma D."/>
            <person name="Maina C.V."/>
            <person name="Martin D.M."/>
            <person name="McCarter J.P."/>
            <person name="McReynolds L."/>
            <person name="Mitreva M."/>
            <person name="Nutman T.B."/>
            <person name="Parkinson J."/>
            <person name="Peregrin-Alvarez J.M."/>
            <person name="Poole C."/>
            <person name="Ren Q."/>
            <person name="Saunders L."/>
            <person name="Sluder A.E."/>
            <person name="Smith K."/>
            <person name="Stanke M."/>
            <person name="Unnasch T.R."/>
            <person name="Ware J."/>
            <person name="Wei A.D."/>
            <person name="Weil G."/>
            <person name="Williams D.J."/>
            <person name="Zhang Y."/>
            <person name="Williams S.A."/>
            <person name="Fraser-Liggett C."/>
            <person name="Slatko B."/>
            <person name="Blaxter M.L."/>
            <person name="Scott A.L."/>
        </authorList>
    </citation>
    <scope>NUCLEOTIDE SEQUENCE [LARGE SCALE GENOMIC DNA]</scope>
</reference>
<reference key="3">
    <citation type="journal article" date="2015" name="Bioorg. Med. Chem. Lett.">
        <title>Identification and activity of inhibitors of the essential nematode-specific metalloprotease DPY-31.</title>
        <authorList>
            <person name="France D.J."/>
            <person name="Stepek G."/>
            <person name="Houston D.R."/>
            <person name="Williams L."/>
            <person name="McCormack G."/>
            <person name="Walkinshaw M.D."/>
            <person name="Page A.P."/>
        </authorList>
    </citation>
    <scope>CATALYTIC ACTIVITY</scope>
    <scope>ACTIVITY REGULATION</scope>
</reference>
<protein>
    <recommendedName>
        <fullName evidence="2">Zinc metalloproteinase dpy-31</fullName>
        <ecNumber evidence="8 9">3.4.24.-</ecNumber>
    </recommendedName>
    <alternativeName>
        <fullName evidence="10">Nematode astacin 35</fullName>
    </alternativeName>
    <alternativeName>
        <fullName evidence="2">Procollagen C-proteinase</fullName>
    </alternativeName>
</protein>
<dbReference type="EC" id="3.4.24.-" evidence="8 9"/>
<dbReference type="EMBL" id="FJ812518">
    <property type="protein sequence ID" value="ACZ64270.1"/>
    <property type="molecule type" value="Genomic_DNA"/>
</dbReference>
<dbReference type="EMBL" id="FJ812518">
    <property type="protein sequence ID" value="ACZ64271.1"/>
    <property type="molecule type" value="Genomic_DNA"/>
</dbReference>
<dbReference type="EMBL" id="LN857013">
    <property type="protein sequence ID" value="CRZ25723.1"/>
    <property type="molecule type" value="Genomic_DNA"/>
</dbReference>
<dbReference type="SMR" id="A8Q2D1"/>
<dbReference type="STRING" id="6279.A8Q2D1"/>
<dbReference type="BindingDB" id="A8Q2D1"/>
<dbReference type="ChEMBL" id="CHEMBL3739250"/>
<dbReference type="MEROPS" id="M12.321"/>
<dbReference type="GlyCosmos" id="A8Q2D1">
    <property type="glycosylation" value="2 sites, No reported glycans"/>
</dbReference>
<dbReference type="EnsemblMetazoa" id="Bm5432a.1">
    <molecule id="A8Q2D1-1"/>
    <property type="protein sequence ID" value="Bm5432a.1"/>
    <property type="gene ID" value="WBGene00225693"/>
</dbReference>
<dbReference type="WormBase" id="Bm5432">
    <property type="protein sequence ID" value="BM29748"/>
    <property type="gene ID" value="WBGene00225693"/>
    <property type="gene designation" value="Bma-dpy-31"/>
</dbReference>
<dbReference type="InParanoid" id="A8Q2D1"/>
<dbReference type="OMA" id="GMRYCCY"/>
<dbReference type="Proteomes" id="UP000006672">
    <property type="component" value="Unassembled WGS sequence"/>
</dbReference>
<dbReference type="GO" id="GO:0005576">
    <property type="term" value="C:extracellular region"/>
    <property type="evidence" value="ECO:0007669"/>
    <property type="project" value="UniProtKB-SubCell"/>
</dbReference>
<dbReference type="GO" id="GO:0004222">
    <property type="term" value="F:metalloendopeptidase activity"/>
    <property type="evidence" value="ECO:0007669"/>
    <property type="project" value="InterPro"/>
</dbReference>
<dbReference type="GO" id="GO:0008270">
    <property type="term" value="F:zinc ion binding"/>
    <property type="evidence" value="ECO:0007669"/>
    <property type="project" value="InterPro"/>
</dbReference>
<dbReference type="GO" id="GO:0018996">
    <property type="term" value="P:molting cycle, collagen and cuticulin-based cuticle"/>
    <property type="evidence" value="ECO:0007669"/>
    <property type="project" value="InterPro"/>
</dbReference>
<dbReference type="GO" id="GO:0006508">
    <property type="term" value="P:proteolysis"/>
    <property type="evidence" value="ECO:0007669"/>
    <property type="project" value="UniProtKB-KW"/>
</dbReference>
<dbReference type="CDD" id="cd00041">
    <property type="entry name" value="CUB"/>
    <property type="match status" value="1"/>
</dbReference>
<dbReference type="CDD" id="cd00054">
    <property type="entry name" value="EGF_CA"/>
    <property type="match status" value="1"/>
</dbReference>
<dbReference type="CDD" id="cd04280">
    <property type="entry name" value="ZnMc_astacin_like"/>
    <property type="match status" value="1"/>
</dbReference>
<dbReference type="FunFam" id="2.60.120.290:FF:000093">
    <property type="entry name" value="Zinc metalloproteinase"/>
    <property type="match status" value="1"/>
</dbReference>
<dbReference type="FunFam" id="3.40.390.10:FF:000028">
    <property type="entry name" value="Zinc metalloproteinase"/>
    <property type="match status" value="1"/>
</dbReference>
<dbReference type="Gene3D" id="3.40.390.10">
    <property type="entry name" value="Collagenase (Catalytic Domain)"/>
    <property type="match status" value="1"/>
</dbReference>
<dbReference type="Gene3D" id="2.60.120.290">
    <property type="entry name" value="Spermadhesin, CUB domain"/>
    <property type="match status" value="1"/>
</dbReference>
<dbReference type="InterPro" id="IPR034035">
    <property type="entry name" value="Astacin-like_dom"/>
</dbReference>
<dbReference type="InterPro" id="IPR000859">
    <property type="entry name" value="CUB_dom"/>
</dbReference>
<dbReference type="InterPro" id="IPR000742">
    <property type="entry name" value="EGF-like_dom"/>
</dbReference>
<dbReference type="InterPro" id="IPR024079">
    <property type="entry name" value="MetalloPept_cat_dom_sf"/>
</dbReference>
<dbReference type="InterPro" id="IPR017050">
    <property type="entry name" value="Metallopeptidase_nem"/>
</dbReference>
<dbReference type="InterPro" id="IPR001506">
    <property type="entry name" value="Peptidase_M12A"/>
</dbReference>
<dbReference type="InterPro" id="IPR006026">
    <property type="entry name" value="Peptidase_Metallo"/>
</dbReference>
<dbReference type="InterPro" id="IPR035914">
    <property type="entry name" value="Sperma_CUB_dom_sf"/>
</dbReference>
<dbReference type="PANTHER" id="PTHR10127">
    <property type="entry name" value="DISCOIDIN, CUB, EGF, LAMININ , AND ZINC METALLOPROTEASE DOMAIN CONTAINING"/>
    <property type="match status" value="1"/>
</dbReference>
<dbReference type="PANTHER" id="PTHR10127:SF813">
    <property type="entry name" value="ZINC METALLOPROTEINASE DPY-31"/>
    <property type="match status" value="1"/>
</dbReference>
<dbReference type="Pfam" id="PF01400">
    <property type="entry name" value="Astacin"/>
    <property type="match status" value="1"/>
</dbReference>
<dbReference type="Pfam" id="PF00431">
    <property type="entry name" value="CUB"/>
    <property type="match status" value="1"/>
</dbReference>
<dbReference type="PIRSF" id="PIRSF036365">
    <property type="entry name" value="Astacin_nematoda"/>
    <property type="match status" value="1"/>
</dbReference>
<dbReference type="PRINTS" id="PR00480">
    <property type="entry name" value="ASTACIN"/>
</dbReference>
<dbReference type="SMART" id="SM00042">
    <property type="entry name" value="CUB"/>
    <property type="match status" value="1"/>
</dbReference>
<dbReference type="SMART" id="SM00235">
    <property type="entry name" value="ZnMc"/>
    <property type="match status" value="1"/>
</dbReference>
<dbReference type="SUPFAM" id="SSF55486">
    <property type="entry name" value="Metalloproteases ('zincins'), catalytic domain"/>
    <property type="match status" value="1"/>
</dbReference>
<dbReference type="SUPFAM" id="SSF49854">
    <property type="entry name" value="Spermadhesin, CUB domain"/>
    <property type="match status" value="1"/>
</dbReference>
<dbReference type="PROSITE" id="PS51864">
    <property type="entry name" value="ASTACIN"/>
    <property type="match status" value="1"/>
</dbReference>
<dbReference type="PROSITE" id="PS01180">
    <property type="entry name" value="CUB"/>
    <property type="match status" value="1"/>
</dbReference>
<dbReference type="PROSITE" id="PS00022">
    <property type="entry name" value="EGF_1"/>
    <property type="match status" value="1"/>
</dbReference>
<dbReference type="PROSITE" id="PS01186">
    <property type="entry name" value="EGF_2"/>
    <property type="match status" value="1"/>
</dbReference>
<dbReference type="PROSITE" id="PS00142">
    <property type="entry name" value="ZINC_PROTEASE"/>
    <property type="match status" value="1"/>
</dbReference>
<comment type="function">
    <text evidence="8">Metalloprotease which cleaves the carboxyl terminus of procollagens to mature collagens. Probably involved in cuticular collagen maturation.</text>
</comment>
<comment type="cofactor">
    <cofactor evidence="7">
        <name>Zn(2+)</name>
        <dbReference type="ChEBI" id="CHEBI:29105"/>
    </cofactor>
    <text evidence="7">Binds 1 zinc ion per subunit.</text>
</comment>
<comment type="activity regulation">
    <text evidence="9">Inhibited by marimastat and tripeptide hydroxamic acids.</text>
</comment>
<comment type="subcellular location">
    <subcellularLocation>
        <location evidence="11">Secreted</location>
    </subcellularLocation>
</comment>
<comment type="alternative products">
    <event type="alternative splicing"/>
    <isoform>
        <id>A8Q2D1-1</id>
        <name evidence="10">dpy-31a</name>
        <sequence type="displayed"/>
    </isoform>
    <isoform>
        <id>A8Q2D1-2</id>
        <name evidence="10">dpy-31b</name>
        <sequence type="described" ref="VSP_059217"/>
    </isoform>
</comment>
<organism evidence="12">
    <name type="scientific">Brugia malayi</name>
    <name type="common">Filarial nematode worm</name>
    <dbReference type="NCBI Taxonomy" id="6279"/>
    <lineage>
        <taxon>Eukaryota</taxon>
        <taxon>Metazoa</taxon>
        <taxon>Ecdysozoa</taxon>
        <taxon>Nematoda</taxon>
        <taxon>Chromadorea</taxon>
        <taxon>Rhabditida</taxon>
        <taxon>Spirurina</taxon>
        <taxon>Spiruromorpha</taxon>
        <taxon>Filarioidea</taxon>
        <taxon>Onchocercidae</taxon>
        <taxon>Brugia</taxon>
    </lineage>
</organism>
<evidence type="ECO:0000250" key="1">
    <source>
        <dbReference type="UniProtKB" id="P13497"/>
    </source>
</evidence>
<evidence type="ECO:0000250" key="2">
    <source>
        <dbReference type="UniProtKB" id="P98060"/>
    </source>
</evidence>
<evidence type="ECO:0000255" key="3"/>
<evidence type="ECO:0000255" key="4">
    <source>
        <dbReference type="PROSITE-ProRule" id="PRU00059"/>
    </source>
</evidence>
<evidence type="ECO:0000255" key="5">
    <source>
        <dbReference type="PROSITE-ProRule" id="PRU00076"/>
    </source>
</evidence>
<evidence type="ECO:0000255" key="6">
    <source>
        <dbReference type="PROSITE-ProRule" id="PRU00498"/>
    </source>
</evidence>
<evidence type="ECO:0000255" key="7">
    <source>
        <dbReference type="PROSITE-ProRule" id="PRU01211"/>
    </source>
</evidence>
<evidence type="ECO:0000269" key="8">
    <source>
    </source>
</evidence>
<evidence type="ECO:0000269" key="9">
    <source>
    </source>
</evidence>
<evidence type="ECO:0000303" key="10">
    <source>
    </source>
</evidence>
<evidence type="ECO:0000305" key="11"/>
<evidence type="ECO:0000312" key="12">
    <source>
        <dbReference type="EMBL" id="ACZ64270.1"/>
    </source>
</evidence>
<evidence type="ECO:0000312" key="13">
    <source>
        <dbReference type="Proteomes" id="UP000006672"/>
    </source>
</evidence>
<evidence type="ECO:0000312" key="14">
    <source>
        <dbReference type="WormBase" id="Bm5432"/>
    </source>
</evidence>